<comment type="function">
    <text evidence="4">Acts as a transcriptional activator or repressor. Implicated in the regulation of cell-type specific gene expression and play a role in inductive events during lens development.</text>
</comment>
<comment type="subunit">
    <text evidence="1">Homodimer or heterodimer with other bHLH-Zip transcription factors. Binds DNA as a homodimer or a heterodimer (By similarity).</text>
</comment>
<comment type="subcellular location">
    <subcellularLocation>
        <location evidence="2">Nucleus</location>
    </subcellularLocation>
</comment>
<comment type="developmental stage">
    <text evidence="4">Expressed in the anterior neuroectoderm at stage 14. Expressed during the formation of the neural tube in rhombomeres (r) 5 and 6, in the derivative neural crest cells and then in the dorsal half of neural tube of r5 and r6 at stage 24. Expressed in the presumptive blood islands at stages 22 and 24. By stage 28 its expression in r5 disappears, but becomes detectable in r4 at stages 29 and 30. Its expression in r6 persists until stages 33 and 34. Expressed through r4 in two bilaterally symmetrical columns of cells in the dorsolateral spinal cord at stage 32. Expressed in developing somites at stages 33 and 34. Expressed in myotomal cells at stage 32. Expressed in the pronephros at stage 28. Expressed in the presumptive lens-forming ectoderm (PLE) at stage 22 and during lens formation. Expressed in the inner (sensorial) layer of PLE, developing lens placode and lens epithelium. Expressed in the anterior part of lens vesicle at stages 32 to 34.</text>
</comment>
<comment type="similarity">
    <text evidence="5">Belongs to the bZIP family. Maf subfamily.</text>
</comment>
<evidence type="ECO:0000250" key="1"/>
<evidence type="ECO:0000255" key="2">
    <source>
        <dbReference type="PROSITE-ProRule" id="PRU00978"/>
    </source>
</evidence>
<evidence type="ECO:0000256" key="3">
    <source>
        <dbReference type="SAM" id="MobiDB-lite"/>
    </source>
</evidence>
<evidence type="ECO:0000269" key="4">
    <source>
    </source>
</evidence>
<evidence type="ECO:0000305" key="5"/>
<name>MAFB_XENLA</name>
<protein>
    <recommendedName>
        <fullName>Transcription factor MafB</fullName>
        <shortName>Maf-B</shortName>
        <shortName>XMafB</shortName>
    </recommendedName>
</protein>
<accession>Q6DE84</accession>
<accession>Q9PUA6</accession>
<sequence>MAGELPIATPLPTSPLAMEYLNDFDLMKFDVKKEPLGGRPDRAIRQCNRLQPTGSVSSTPISTPCSSVPSSPSFSPTEHKTHLDDLYWMSSSSYQHVSPEALNLTPEDAVEALIGQHQMPPQLQGYESFRAHHHHHHQNQHQYQGVHHEEMGLPHHHPHHHQHQHHQTSPSPSGSSSSSQQLHHQQQHSSSSAVEDRFSDDQLVSMTVRELNRHLRGFTKDDVIRLKQKRRTLKNRGYAQSCRYKRVQQKHNLEGEKTQLVQQVEQLKQEVSRLARERDAYKIKCEKLANNNSSNFREAGSTSDNPSSPEFFM</sequence>
<dbReference type="EMBL" id="AF202058">
    <property type="protein sequence ID" value="AAF08316.1"/>
    <property type="molecule type" value="mRNA"/>
</dbReference>
<dbReference type="EMBL" id="BC077255">
    <property type="protein sequence ID" value="AAH77255.1"/>
    <property type="molecule type" value="mRNA"/>
</dbReference>
<dbReference type="RefSeq" id="NP_001083852.1">
    <property type="nucleotide sequence ID" value="NM_001090383.1"/>
</dbReference>
<dbReference type="SMR" id="Q6DE84"/>
<dbReference type="GeneID" id="399156"/>
<dbReference type="KEGG" id="xla:399156"/>
<dbReference type="AGR" id="Xenbase:XB-GENE-6085884"/>
<dbReference type="CTD" id="399156"/>
<dbReference type="Xenbase" id="XB-GENE-6085884">
    <property type="gene designation" value="mafb.S"/>
</dbReference>
<dbReference type="OMA" id="GVHHEEM"/>
<dbReference type="OrthoDB" id="5974330at2759"/>
<dbReference type="Proteomes" id="UP000186698">
    <property type="component" value="Chromosome 9_10S"/>
</dbReference>
<dbReference type="Bgee" id="399156">
    <property type="expression patterns" value="Expressed in spleen and 19 other cell types or tissues"/>
</dbReference>
<dbReference type="GO" id="GO:0005634">
    <property type="term" value="C:nucleus"/>
    <property type="evidence" value="ECO:0000318"/>
    <property type="project" value="GO_Central"/>
</dbReference>
<dbReference type="GO" id="GO:0000981">
    <property type="term" value="F:DNA-binding transcription factor activity, RNA polymerase II-specific"/>
    <property type="evidence" value="ECO:0000318"/>
    <property type="project" value="GO_Central"/>
</dbReference>
<dbReference type="GO" id="GO:0000978">
    <property type="term" value="F:RNA polymerase II cis-regulatory region sequence-specific DNA binding"/>
    <property type="evidence" value="ECO:0000318"/>
    <property type="project" value="GO_Central"/>
</dbReference>
<dbReference type="GO" id="GO:0006355">
    <property type="term" value="P:regulation of DNA-templated transcription"/>
    <property type="evidence" value="ECO:0000250"/>
    <property type="project" value="UniProtKB"/>
</dbReference>
<dbReference type="GO" id="GO:0045637">
    <property type="term" value="P:regulation of myeloid cell differentiation"/>
    <property type="evidence" value="ECO:0000318"/>
    <property type="project" value="GO_Central"/>
</dbReference>
<dbReference type="GO" id="GO:0006357">
    <property type="term" value="P:regulation of transcription by RNA polymerase II"/>
    <property type="evidence" value="ECO:0000318"/>
    <property type="project" value="GO_Central"/>
</dbReference>
<dbReference type="CDD" id="cd14718">
    <property type="entry name" value="bZIP_Maf_large"/>
    <property type="match status" value="1"/>
</dbReference>
<dbReference type="FunFam" id="1.20.5.170:FF:000016">
    <property type="entry name" value="MAF bZIP transcription factor"/>
    <property type="match status" value="1"/>
</dbReference>
<dbReference type="Gene3D" id="1.20.5.170">
    <property type="match status" value="1"/>
</dbReference>
<dbReference type="InterPro" id="IPR004827">
    <property type="entry name" value="bZIP"/>
</dbReference>
<dbReference type="InterPro" id="IPR004826">
    <property type="entry name" value="bZIP_Maf"/>
</dbReference>
<dbReference type="InterPro" id="IPR046347">
    <property type="entry name" value="bZIP_sf"/>
</dbReference>
<dbReference type="InterPro" id="IPR013592">
    <property type="entry name" value="Maf_TF_N"/>
</dbReference>
<dbReference type="InterPro" id="IPR008917">
    <property type="entry name" value="TF_DNA-bd_sf"/>
</dbReference>
<dbReference type="InterPro" id="IPR024874">
    <property type="entry name" value="Transcription_factor_Maf_fam"/>
</dbReference>
<dbReference type="PANTHER" id="PTHR10129">
    <property type="entry name" value="TRANSCRIPTION FACTOR MAF"/>
    <property type="match status" value="1"/>
</dbReference>
<dbReference type="PANTHER" id="PTHR10129:SF10">
    <property type="entry name" value="TRANSCRIPTION FACTOR MAFB"/>
    <property type="match status" value="1"/>
</dbReference>
<dbReference type="Pfam" id="PF03131">
    <property type="entry name" value="bZIP_Maf"/>
    <property type="match status" value="1"/>
</dbReference>
<dbReference type="Pfam" id="PF08383">
    <property type="entry name" value="Maf_N"/>
    <property type="match status" value="1"/>
</dbReference>
<dbReference type="SMART" id="SM00338">
    <property type="entry name" value="BRLZ"/>
    <property type="match status" value="1"/>
</dbReference>
<dbReference type="SUPFAM" id="SSF47454">
    <property type="entry name" value="A DNA-binding domain in eukaryotic transcription factors"/>
    <property type="match status" value="1"/>
</dbReference>
<dbReference type="SUPFAM" id="SSF57959">
    <property type="entry name" value="Leucine zipper domain"/>
    <property type="match status" value="1"/>
</dbReference>
<dbReference type="PROSITE" id="PS50217">
    <property type="entry name" value="BZIP"/>
    <property type="match status" value="1"/>
</dbReference>
<reference key="1">
    <citation type="journal article" date="2001" name="Mech. Dev.">
        <title>Distinct roles of maf genes during Xenopus lens development.</title>
        <authorList>
            <person name="Ishibashi S."/>
            <person name="Yasuda K."/>
        </authorList>
    </citation>
    <scope>NUCLEOTIDE SEQUENCE [MRNA]</scope>
    <scope>FUNCTION</scope>
    <scope>DEVELOPMENTAL STAGE</scope>
    <source>
        <tissue>Embryonic head</tissue>
    </source>
</reference>
<reference key="2">
    <citation type="submission" date="2004-07" db="EMBL/GenBank/DDBJ databases">
        <authorList>
            <consortium name="NIH - Xenopus Gene Collection (XGC) project"/>
        </authorList>
    </citation>
    <scope>NUCLEOTIDE SEQUENCE [LARGE SCALE MRNA]</scope>
    <source>
        <tissue>Spleen</tissue>
    </source>
</reference>
<keyword id="KW-0010">Activator</keyword>
<keyword id="KW-0238">DNA-binding</keyword>
<keyword id="KW-0539">Nucleus</keyword>
<keyword id="KW-1185">Reference proteome</keyword>
<keyword id="KW-0678">Repressor</keyword>
<keyword id="KW-0804">Transcription</keyword>
<keyword id="KW-0805">Transcription regulation</keyword>
<organism>
    <name type="scientific">Xenopus laevis</name>
    <name type="common">African clawed frog</name>
    <dbReference type="NCBI Taxonomy" id="8355"/>
    <lineage>
        <taxon>Eukaryota</taxon>
        <taxon>Metazoa</taxon>
        <taxon>Chordata</taxon>
        <taxon>Craniata</taxon>
        <taxon>Vertebrata</taxon>
        <taxon>Euteleostomi</taxon>
        <taxon>Amphibia</taxon>
        <taxon>Batrachia</taxon>
        <taxon>Anura</taxon>
        <taxon>Pipoidea</taxon>
        <taxon>Pipidae</taxon>
        <taxon>Xenopodinae</taxon>
        <taxon>Xenopus</taxon>
        <taxon>Xenopus</taxon>
    </lineage>
</organism>
<proteinExistence type="evidence at transcript level"/>
<gene>
    <name type="primary">mafb</name>
</gene>
<feature type="chain" id="PRO_0000366126" description="Transcription factor MafB">
    <location>
        <begin position="1"/>
        <end position="313"/>
    </location>
</feature>
<feature type="domain" description="bZIP" evidence="2">
    <location>
        <begin position="225"/>
        <end position="288"/>
    </location>
</feature>
<feature type="region of interest" description="Disordered" evidence="3">
    <location>
        <begin position="51"/>
        <end position="77"/>
    </location>
</feature>
<feature type="region of interest" description="Disordered" evidence="3">
    <location>
        <begin position="151"/>
        <end position="197"/>
    </location>
</feature>
<feature type="region of interest" description="Basic motif" evidence="2">
    <location>
        <begin position="225"/>
        <end position="250"/>
    </location>
</feature>
<feature type="region of interest" description="Leucine-zipper" evidence="2">
    <location>
        <begin position="253"/>
        <end position="274"/>
    </location>
</feature>
<feature type="region of interest" description="Disordered" evidence="3">
    <location>
        <begin position="292"/>
        <end position="313"/>
    </location>
</feature>
<feature type="compositionally biased region" description="Low complexity" evidence="3">
    <location>
        <begin position="55"/>
        <end position="76"/>
    </location>
</feature>
<feature type="compositionally biased region" description="Basic residues" evidence="3">
    <location>
        <begin position="154"/>
        <end position="166"/>
    </location>
</feature>
<feature type="compositionally biased region" description="Low complexity" evidence="3">
    <location>
        <begin position="167"/>
        <end position="192"/>
    </location>
</feature>
<feature type="sequence conflict" description="In Ref. 1; AAF08316." evidence="5" ref="1">
    <original>F</original>
    <variation>L</variation>
    <location>
        <position position="198"/>
    </location>
</feature>